<dbReference type="EMBL" id="AE016826">
    <property type="protein sequence ID" value="AAO27125.1"/>
    <property type="molecule type" value="Genomic_DNA"/>
</dbReference>
<dbReference type="SMR" id="Q89AA5"/>
<dbReference type="STRING" id="224915.bbp_415"/>
<dbReference type="KEGG" id="bab:bbp_415"/>
<dbReference type="eggNOG" id="COG1845">
    <property type="taxonomic scope" value="Bacteria"/>
</dbReference>
<dbReference type="HOGENOM" id="CLU_044071_3_0_6"/>
<dbReference type="Proteomes" id="UP000000601">
    <property type="component" value="Chromosome"/>
</dbReference>
<dbReference type="GO" id="GO:0005886">
    <property type="term" value="C:plasma membrane"/>
    <property type="evidence" value="ECO:0007669"/>
    <property type="project" value="UniProtKB-SubCell"/>
</dbReference>
<dbReference type="GO" id="GO:0009486">
    <property type="term" value="F:cytochrome bo3 ubiquinol oxidase activity"/>
    <property type="evidence" value="ECO:0007669"/>
    <property type="project" value="InterPro"/>
</dbReference>
<dbReference type="GO" id="GO:0004129">
    <property type="term" value="F:cytochrome-c oxidase activity"/>
    <property type="evidence" value="ECO:0007669"/>
    <property type="project" value="InterPro"/>
</dbReference>
<dbReference type="GO" id="GO:0019646">
    <property type="term" value="P:aerobic electron transport chain"/>
    <property type="evidence" value="ECO:0007669"/>
    <property type="project" value="InterPro"/>
</dbReference>
<dbReference type="CDD" id="cd02863">
    <property type="entry name" value="Ubiquinol_oxidase_III"/>
    <property type="match status" value="1"/>
</dbReference>
<dbReference type="FunFam" id="1.20.120.80:FF:000001">
    <property type="entry name" value="Cytochrome (Ubi)quinol oxidase subunit III"/>
    <property type="match status" value="1"/>
</dbReference>
<dbReference type="Gene3D" id="1.20.120.80">
    <property type="entry name" value="Cytochrome c oxidase, subunit III, four-helix bundle"/>
    <property type="match status" value="1"/>
</dbReference>
<dbReference type="InterPro" id="IPR024791">
    <property type="entry name" value="Cyt_c/ubiquinol_Oxase_su3"/>
</dbReference>
<dbReference type="InterPro" id="IPR000298">
    <property type="entry name" value="Cyt_c_oxidase-like_su3"/>
</dbReference>
<dbReference type="InterPro" id="IPR035973">
    <property type="entry name" value="Cyt_c_oxidase_su3-like_sf"/>
</dbReference>
<dbReference type="InterPro" id="IPR013833">
    <property type="entry name" value="Cyt_c_oxidase_su3_a-hlx"/>
</dbReference>
<dbReference type="InterPro" id="IPR014206">
    <property type="entry name" value="Cyt_c_ubiqinol_oxidase_su3"/>
</dbReference>
<dbReference type="InterPro" id="IPR033946">
    <property type="entry name" value="Ubiquinol_oxase_su3_dom"/>
</dbReference>
<dbReference type="NCBIfam" id="TIGR02842">
    <property type="entry name" value="CyoC"/>
    <property type="match status" value="1"/>
</dbReference>
<dbReference type="PANTHER" id="PTHR11403:SF2">
    <property type="entry name" value="CYTOCHROME BO(3) UBIQUINOL OXIDASE SUBUNIT 3"/>
    <property type="match status" value="1"/>
</dbReference>
<dbReference type="PANTHER" id="PTHR11403">
    <property type="entry name" value="CYTOCHROME C OXIDASE SUBUNIT III"/>
    <property type="match status" value="1"/>
</dbReference>
<dbReference type="Pfam" id="PF00510">
    <property type="entry name" value="COX3"/>
    <property type="match status" value="1"/>
</dbReference>
<dbReference type="SUPFAM" id="SSF81452">
    <property type="entry name" value="Cytochrome c oxidase subunit III-like"/>
    <property type="match status" value="1"/>
</dbReference>
<dbReference type="PROSITE" id="PS50253">
    <property type="entry name" value="COX3"/>
    <property type="match status" value="1"/>
</dbReference>
<name>CYOC_BUCBP</name>
<sequence length="194" mass="22941">MKKKYKIDTNIFSKELLGFWLYLMSDCIIFCTLFSVYFILVDNVAQGPSGHNIFQNNLIIIETFLLLFSSFSCNLVLFEMKNKNLYMVFLWLGITFLLGLLFVFLELFEFFHLINLGFGPTRSGFLSSFFVLIATHGIHVISGLIWIIVMIKYVYTFNITNLIYYRMLCLNLFWHFLDIVWVFIFSFVYLFGMV</sequence>
<keyword id="KW-1003">Cell membrane</keyword>
<keyword id="KW-0249">Electron transport</keyword>
<keyword id="KW-0472">Membrane</keyword>
<keyword id="KW-0560">Oxidoreductase</keyword>
<keyword id="KW-1185">Reference proteome</keyword>
<keyword id="KW-0812">Transmembrane</keyword>
<keyword id="KW-1133">Transmembrane helix</keyword>
<keyword id="KW-0813">Transport</keyword>
<feature type="chain" id="PRO_0000183898" description="Cytochrome bo(3) ubiquinol oxidase subunit 3">
    <location>
        <begin position="1"/>
        <end position="194"/>
    </location>
</feature>
<feature type="topological domain" description="Cytoplasmic" evidence="2">
    <location>
        <begin position="1"/>
        <end position="18"/>
    </location>
</feature>
<feature type="transmembrane region" description="Helical" evidence="2">
    <location>
        <begin position="19"/>
        <end position="41"/>
    </location>
</feature>
<feature type="topological domain" description="Extracellular" evidence="2">
    <location>
        <begin position="42"/>
        <end position="55"/>
    </location>
</feature>
<feature type="transmembrane region" description="Helical" evidence="2">
    <location>
        <begin position="56"/>
        <end position="78"/>
    </location>
</feature>
<feature type="topological domain" description="Cytoplasmic" evidence="2">
    <location>
        <begin position="79"/>
        <end position="84"/>
    </location>
</feature>
<feature type="transmembrane region" description="Helical" evidence="2">
    <location>
        <begin position="85"/>
        <end position="107"/>
    </location>
</feature>
<feature type="topological domain" description="Extracellular" evidence="2">
    <location>
        <begin position="108"/>
        <end position="126"/>
    </location>
</feature>
<feature type="transmembrane region" description="Helical" evidence="2">
    <location>
        <begin position="127"/>
        <end position="149"/>
    </location>
</feature>
<feature type="topological domain" description="Cytoplasmic" evidence="2">
    <location>
        <begin position="150"/>
        <end position="169"/>
    </location>
</feature>
<feature type="transmembrane region" description="Helical" evidence="2">
    <location>
        <begin position="170"/>
        <end position="192"/>
    </location>
</feature>
<feature type="topological domain" description="Extracellular" evidence="2">
    <location>
        <begin position="193"/>
        <end position="194"/>
    </location>
</feature>
<accession>Q89AA5</accession>
<proteinExistence type="inferred from homology"/>
<comment type="function">
    <text evidence="1">Cytochrome bo(3) ubiquinol terminal oxidase is the component of the aerobic respiratory chain of E.coli that predominates when cells are grown at high aeration. Has proton pump activity across the membrane in addition to electron transfer, pumping 2 protons/electron (By similarity).</text>
</comment>
<comment type="subunit">
    <text evidence="1">Heterooctamer of two A chains, two B chains, two C chains and two D chains.</text>
</comment>
<comment type="subcellular location">
    <subcellularLocation>
        <location evidence="1">Cell membrane</location>
        <topology evidence="1">Multi-pass membrane protein</topology>
    </subcellularLocation>
</comment>
<comment type="similarity">
    <text evidence="3">Belongs to the cytochrome c oxidase subunit 3 family.</text>
</comment>
<evidence type="ECO:0000250" key="1"/>
<evidence type="ECO:0000255" key="2"/>
<evidence type="ECO:0000305" key="3"/>
<reference key="1">
    <citation type="journal article" date="2003" name="Proc. Natl. Acad. Sci. U.S.A.">
        <title>Reductive genome evolution in Buchnera aphidicola.</title>
        <authorList>
            <person name="van Ham R.C.H.J."/>
            <person name="Kamerbeek J."/>
            <person name="Palacios C."/>
            <person name="Rausell C."/>
            <person name="Abascal F."/>
            <person name="Bastolla U."/>
            <person name="Fernandez J.M."/>
            <person name="Jimenez L."/>
            <person name="Postigo M."/>
            <person name="Silva F.J."/>
            <person name="Tamames J."/>
            <person name="Viguera E."/>
            <person name="Latorre A."/>
            <person name="Valencia A."/>
            <person name="Moran F."/>
            <person name="Moya A."/>
        </authorList>
    </citation>
    <scope>NUCLEOTIDE SEQUENCE [LARGE SCALE GENOMIC DNA]</scope>
    <source>
        <strain>Bp</strain>
    </source>
</reference>
<gene>
    <name type="primary">cyoC</name>
    <name type="ordered locus">bbp_415</name>
</gene>
<organism>
    <name type="scientific">Buchnera aphidicola subsp. Baizongia pistaciae (strain Bp)</name>
    <dbReference type="NCBI Taxonomy" id="224915"/>
    <lineage>
        <taxon>Bacteria</taxon>
        <taxon>Pseudomonadati</taxon>
        <taxon>Pseudomonadota</taxon>
        <taxon>Gammaproteobacteria</taxon>
        <taxon>Enterobacterales</taxon>
        <taxon>Erwiniaceae</taxon>
        <taxon>Buchnera</taxon>
    </lineage>
</organism>
<protein>
    <recommendedName>
        <fullName>Cytochrome bo(3) ubiquinol oxidase subunit 3</fullName>
    </recommendedName>
    <alternativeName>
        <fullName>Cytochrome o ubiquinol oxidase subunit 3</fullName>
        <shortName>Cytochrome o subunit 3</shortName>
    </alternativeName>
    <alternativeName>
        <fullName>Oxidase bo(3) subunit 3</fullName>
    </alternativeName>
    <alternativeName>
        <fullName>Ubiquinol oxidase polypeptide III</fullName>
    </alternativeName>
    <alternativeName>
        <fullName>Ubiquinol oxidase subunit 3</fullName>
    </alternativeName>
</protein>